<sequence length="171" mass="19106">MIREIIRMGDKRLLRVAPPVTNLGSDELHALVADMFETMDAARGVGLAAPQIAVDLQLMVFGFEASERYPEAPAVPRTALANVQIEPLSDEMENGWEGCLSIPGLRAVIPRHRVIRYSGFAPDGTPIEREAEGFHARVVQHEYDHLVGRLYPSRIENFDTFGFEDVLSYDL</sequence>
<protein>
    <recommendedName>
        <fullName evidence="1">Peptide deformylase 1</fullName>
        <shortName evidence="1">PDF 1</shortName>
        <ecNumber evidence="1">3.5.1.88</ecNumber>
    </recommendedName>
    <alternativeName>
        <fullName evidence="1">Polypeptide deformylase 1</fullName>
    </alternativeName>
</protein>
<evidence type="ECO:0000255" key="1">
    <source>
        <dbReference type="HAMAP-Rule" id="MF_00163"/>
    </source>
</evidence>
<comment type="function">
    <text evidence="1">Removes the formyl group from the N-terminal Met of newly synthesized proteins. Requires at least a dipeptide for an efficient rate of reaction. N-terminal L-methionine is a prerequisite for activity but the enzyme has broad specificity at other positions.</text>
</comment>
<comment type="catalytic activity">
    <reaction evidence="1">
        <text>N-terminal N-formyl-L-methionyl-[peptide] + H2O = N-terminal L-methionyl-[peptide] + formate</text>
        <dbReference type="Rhea" id="RHEA:24420"/>
        <dbReference type="Rhea" id="RHEA-COMP:10639"/>
        <dbReference type="Rhea" id="RHEA-COMP:10640"/>
        <dbReference type="ChEBI" id="CHEBI:15377"/>
        <dbReference type="ChEBI" id="CHEBI:15740"/>
        <dbReference type="ChEBI" id="CHEBI:49298"/>
        <dbReference type="ChEBI" id="CHEBI:64731"/>
        <dbReference type="EC" id="3.5.1.88"/>
    </reaction>
</comment>
<comment type="cofactor">
    <cofactor evidence="1">
        <name>Fe(2+)</name>
        <dbReference type="ChEBI" id="CHEBI:29033"/>
    </cofactor>
    <text evidence="1">Binds 1 Fe(2+) ion.</text>
</comment>
<comment type="similarity">
    <text evidence="1">Belongs to the polypeptide deformylase family.</text>
</comment>
<feature type="chain" id="PRO_0000082885" description="Peptide deformylase 1">
    <location>
        <begin position="1"/>
        <end position="171"/>
    </location>
</feature>
<feature type="active site" evidence="1">
    <location>
        <position position="142"/>
    </location>
</feature>
<feature type="binding site" evidence="1">
    <location>
        <position position="99"/>
    </location>
    <ligand>
        <name>Fe cation</name>
        <dbReference type="ChEBI" id="CHEBI:24875"/>
    </ligand>
</feature>
<feature type="binding site" evidence="1">
    <location>
        <position position="141"/>
    </location>
    <ligand>
        <name>Fe cation</name>
        <dbReference type="ChEBI" id="CHEBI:24875"/>
    </ligand>
</feature>
<feature type="binding site" evidence="1">
    <location>
        <position position="145"/>
    </location>
    <ligand>
        <name>Fe cation</name>
        <dbReference type="ChEBI" id="CHEBI:24875"/>
    </ligand>
</feature>
<gene>
    <name evidence="1" type="primary">def1</name>
    <name type="ordered locus">XCC0687</name>
</gene>
<accession>Q8PCN7</accession>
<reference key="1">
    <citation type="journal article" date="2002" name="Nature">
        <title>Comparison of the genomes of two Xanthomonas pathogens with differing host specificities.</title>
        <authorList>
            <person name="da Silva A.C.R."/>
            <person name="Ferro J.A."/>
            <person name="Reinach F.C."/>
            <person name="Farah C.S."/>
            <person name="Furlan L.R."/>
            <person name="Quaggio R.B."/>
            <person name="Monteiro-Vitorello C.B."/>
            <person name="Van Sluys M.A."/>
            <person name="Almeida N.F. Jr."/>
            <person name="Alves L.M.C."/>
            <person name="do Amaral A.M."/>
            <person name="Bertolini M.C."/>
            <person name="Camargo L.E.A."/>
            <person name="Camarotte G."/>
            <person name="Cannavan F."/>
            <person name="Cardozo J."/>
            <person name="Chambergo F."/>
            <person name="Ciapina L.P."/>
            <person name="Cicarelli R.M.B."/>
            <person name="Coutinho L.L."/>
            <person name="Cursino-Santos J.R."/>
            <person name="El-Dorry H."/>
            <person name="Faria J.B."/>
            <person name="Ferreira A.J.S."/>
            <person name="Ferreira R.C.C."/>
            <person name="Ferro M.I.T."/>
            <person name="Formighieri E.F."/>
            <person name="Franco M.C."/>
            <person name="Greggio C.C."/>
            <person name="Gruber A."/>
            <person name="Katsuyama A.M."/>
            <person name="Kishi L.T."/>
            <person name="Leite R.P."/>
            <person name="Lemos E.G.M."/>
            <person name="Lemos M.V.F."/>
            <person name="Locali E.C."/>
            <person name="Machado M.A."/>
            <person name="Madeira A.M.B.N."/>
            <person name="Martinez-Rossi N.M."/>
            <person name="Martins E.C."/>
            <person name="Meidanis J."/>
            <person name="Menck C.F.M."/>
            <person name="Miyaki C.Y."/>
            <person name="Moon D.H."/>
            <person name="Moreira L.M."/>
            <person name="Novo M.T.M."/>
            <person name="Okura V.K."/>
            <person name="Oliveira M.C."/>
            <person name="Oliveira V.R."/>
            <person name="Pereira H.A."/>
            <person name="Rossi A."/>
            <person name="Sena J.A.D."/>
            <person name="Silva C."/>
            <person name="de Souza R.F."/>
            <person name="Spinola L.A.F."/>
            <person name="Takita M.A."/>
            <person name="Tamura R.E."/>
            <person name="Teixeira E.C."/>
            <person name="Tezza R.I.D."/>
            <person name="Trindade dos Santos M."/>
            <person name="Truffi D."/>
            <person name="Tsai S.M."/>
            <person name="White F.F."/>
            <person name="Setubal J.C."/>
            <person name="Kitajima J.P."/>
        </authorList>
    </citation>
    <scope>NUCLEOTIDE SEQUENCE [LARGE SCALE GENOMIC DNA]</scope>
    <source>
        <strain>ATCC 33913 / DSM 3586 / NCPPB 528 / LMG 568 / P 25</strain>
    </source>
</reference>
<organism>
    <name type="scientific">Xanthomonas campestris pv. campestris (strain ATCC 33913 / DSM 3586 / NCPPB 528 / LMG 568 / P 25)</name>
    <dbReference type="NCBI Taxonomy" id="190485"/>
    <lineage>
        <taxon>Bacteria</taxon>
        <taxon>Pseudomonadati</taxon>
        <taxon>Pseudomonadota</taxon>
        <taxon>Gammaproteobacteria</taxon>
        <taxon>Lysobacterales</taxon>
        <taxon>Lysobacteraceae</taxon>
        <taxon>Xanthomonas</taxon>
    </lineage>
</organism>
<proteinExistence type="inferred from homology"/>
<dbReference type="EC" id="3.5.1.88" evidence="1"/>
<dbReference type="EMBL" id="AE008922">
    <property type="protein sequence ID" value="AAM40003.1"/>
    <property type="molecule type" value="Genomic_DNA"/>
</dbReference>
<dbReference type="RefSeq" id="NP_636079.1">
    <property type="nucleotide sequence ID" value="NC_003902.1"/>
</dbReference>
<dbReference type="SMR" id="Q8PCN7"/>
<dbReference type="STRING" id="190485.XCC0687"/>
<dbReference type="EnsemblBacteria" id="AAM40003">
    <property type="protein sequence ID" value="AAM40003"/>
    <property type="gene ID" value="XCC0687"/>
</dbReference>
<dbReference type="KEGG" id="xcc:XCC0687"/>
<dbReference type="PATRIC" id="fig|190485.4.peg.752"/>
<dbReference type="eggNOG" id="COG0242">
    <property type="taxonomic scope" value="Bacteria"/>
</dbReference>
<dbReference type="HOGENOM" id="CLU_061901_5_2_6"/>
<dbReference type="OrthoDB" id="9804313at2"/>
<dbReference type="Proteomes" id="UP000001010">
    <property type="component" value="Chromosome"/>
</dbReference>
<dbReference type="GO" id="GO:0046872">
    <property type="term" value="F:metal ion binding"/>
    <property type="evidence" value="ECO:0007669"/>
    <property type="project" value="UniProtKB-KW"/>
</dbReference>
<dbReference type="GO" id="GO:0042586">
    <property type="term" value="F:peptide deformylase activity"/>
    <property type="evidence" value="ECO:0000318"/>
    <property type="project" value="GO_Central"/>
</dbReference>
<dbReference type="GO" id="GO:0043686">
    <property type="term" value="P:co-translational protein modification"/>
    <property type="evidence" value="ECO:0000318"/>
    <property type="project" value="GO_Central"/>
</dbReference>
<dbReference type="GO" id="GO:0006412">
    <property type="term" value="P:translation"/>
    <property type="evidence" value="ECO:0007669"/>
    <property type="project" value="UniProtKB-UniRule"/>
</dbReference>
<dbReference type="CDD" id="cd00487">
    <property type="entry name" value="Pep_deformylase"/>
    <property type="match status" value="1"/>
</dbReference>
<dbReference type="FunFam" id="3.90.45.10:FF:000003">
    <property type="entry name" value="Peptide deformylase"/>
    <property type="match status" value="1"/>
</dbReference>
<dbReference type="Gene3D" id="3.90.45.10">
    <property type="entry name" value="Peptide deformylase"/>
    <property type="match status" value="1"/>
</dbReference>
<dbReference type="HAMAP" id="MF_00163">
    <property type="entry name" value="Pep_deformylase"/>
    <property type="match status" value="1"/>
</dbReference>
<dbReference type="InterPro" id="IPR023635">
    <property type="entry name" value="Peptide_deformylase"/>
</dbReference>
<dbReference type="InterPro" id="IPR036821">
    <property type="entry name" value="Peptide_deformylase_sf"/>
</dbReference>
<dbReference type="NCBIfam" id="TIGR00079">
    <property type="entry name" value="pept_deformyl"/>
    <property type="match status" value="1"/>
</dbReference>
<dbReference type="NCBIfam" id="NF001159">
    <property type="entry name" value="PRK00150.1-3"/>
    <property type="match status" value="1"/>
</dbReference>
<dbReference type="PANTHER" id="PTHR10458">
    <property type="entry name" value="PEPTIDE DEFORMYLASE"/>
    <property type="match status" value="1"/>
</dbReference>
<dbReference type="PANTHER" id="PTHR10458:SF20">
    <property type="entry name" value="PEPTIDE DEFORMYLASE 1"/>
    <property type="match status" value="1"/>
</dbReference>
<dbReference type="Pfam" id="PF01327">
    <property type="entry name" value="Pep_deformylase"/>
    <property type="match status" value="1"/>
</dbReference>
<dbReference type="PIRSF" id="PIRSF004749">
    <property type="entry name" value="Pep_def"/>
    <property type="match status" value="1"/>
</dbReference>
<dbReference type="PRINTS" id="PR01576">
    <property type="entry name" value="PDEFORMYLASE"/>
</dbReference>
<dbReference type="SUPFAM" id="SSF56420">
    <property type="entry name" value="Peptide deformylase"/>
    <property type="match status" value="1"/>
</dbReference>
<keyword id="KW-0378">Hydrolase</keyword>
<keyword id="KW-0408">Iron</keyword>
<keyword id="KW-0479">Metal-binding</keyword>
<keyword id="KW-0648">Protein biosynthesis</keyword>
<keyword id="KW-1185">Reference proteome</keyword>
<name>DEF1_XANCP</name>